<dbReference type="EC" id="4.3.3.7" evidence="1"/>
<dbReference type="EMBL" id="CP000029">
    <property type="protein sequence ID" value="AAW54297.1"/>
    <property type="molecule type" value="Genomic_DNA"/>
</dbReference>
<dbReference type="RefSeq" id="WP_002446406.1">
    <property type="nucleotide sequence ID" value="NC_002976.3"/>
</dbReference>
<dbReference type="SMR" id="Q5HPE7"/>
<dbReference type="STRING" id="176279.SERP0965"/>
<dbReference type="KEGG" id="ser:SERP0965"/>
<dbReference type="eggNOG" id="COG0329">
    <property type="taxonomic scope" value="Bacteria"/>
</dbReference>
<dbReference type="HOGENOM" id="CLU_049343_7_0_9"/>
<dbReference type="UniPathway" id="UPA00034">
    <property type="reaction ID" value="UER00017"/>
</dbReference>
<dbReference type="Proteomes" id="UP000000531">
    <property type="component" value="Chromosome"/>
</dbReference>
<dbReference type="GO" id="GO:0005829">
    <property type="term" value="C:cytosol"/>
    <property type="evidence" value="ECO:0007669"/>
    <property type="project" value="TreeGrafter"/>
</dbReference>
<dbReference type="GO" id="GO:0008840">
    <property type="term" value="F:4-hydroxy-tetrahydrodipicolinate synthase activity"/>
    <property type="evidence" value="ECO:0007669"/>
    <property type="project" value="UniProtKB-UniRule"/>
</dbReference>
<dbReference type="GO" id="GO:0019877">
    <property type="term" value="P:diaminopimelate biosynthetic process"/>
    <property type="evidence" value="ECO:0007669"/>
    <property type="project" value="UniProtKB-UniRule"/>
</dbReference>
<dbReference type="GO" id="GO:0009089">
    <property type="term" value="P:lysine biosynthetic process via diaminopimelate"/>
    <property type="evidence" value="ECO:0007669"/>
    <property type="project" value="UniProtKB-UniRule"/>
</dbReference>
<dbReference type="CDD" id="cd00950">
    <property type="entry name" value="DHDPS"/>
    <property type="match status" value="1"/>
</dbReference>
<dbReference type="Gene3D" id="3.20.20.70">
    <property type="entry name" value="Aldolase class I"/>
    <property type="match status" value="1"/>
</dbReference>
<dbReference type="HAMAP" id="MF_00418">
    <property type="entry name" value="DapA"/>
    <property type="match status" value="1"/>
</dbReference>
<dbReference type="InterPro" id="IPR013785">
    <property type="entry name" value="Aldolase_TIM"/>
</dbReference>
<dbReference type="InterPro" id="IPR005263">
    <property type="entry name" value="DapA"/>
</dbReference>
<dbReference type="InterPro" id="IPR002220">
    <property type="entry name" value="DapA-like"/>
</dbReference>
<dbReference type="InterPro" id="IPR020625">
    <property type="entry name" value="Schiff_base-form_aldolases_AS"/>
</dbReference>
<dbReference type="NCBIfam" id="TIGR00674">
    <property type="entry name" value="dapA"/>
    <property type="match status" value="1"/>
</dbReference>
<dbReference type="PANTHER" id="PTHR12128:SF66">
    <property type="entry name" value="4-HYDROXY-2-OXOGLUTARATE ALDOLASE, MITOCHONDRIAL"/>
    <property type="match status" value="1"/>
</dbReference>
<dbReference type="PANTHER" id="PTHR12128">
    <property type="entry name" value="DIHYDRODIPICOLINATE SYNTHASE"/>
    <property type="match status" value="1"/>
</dbReference>
<dbReference type="Pfam" id="PF00701">
    <property type="entry name" value="DHDPS"/>
    <property type="match status" value="1"/>
</dbReference>
<dbReference type="PIRSF" id="PIRSF001365">
    <property type="entry name" value="DHDPS"/>
    <property type="match status" value="1"/>
</dbReference>
<dbReference type="PRINTS" id="PR00146">
    <property type="entry name" value="DHPICSNTHASE"/>
</dbReference>
<dbReference type="SMART" id="SM01130">
    <property type="entry name" value="DHDPS"/>
    <property type="match status" value="1"/>
</dbReference>
<dbReference type="SUPFAM" id="SSF51569">
    <property type="entry name" value="Aldolase"/>
    <property type="match status" value="1"/>
</dbReference>
<dbReference type="PROSITE" id="PS00666">
    <property type="entry name" value="DHDPS_2"/>
    <property type="match status" value="1"/>
</dbReference>
<keyword id="KW-0028">Amino-acid biosynthesis</keyword>
<keyword id="KW-0963">Cytoplasm</keyword>
<keyword id="KW-0220">Diaminopimelate biosynthesis</keyword>
<keyword id="KW-0456">Lyase</keyword>
<keyword id="KW-0457">Lysine biosynthesis</keyword>
<keyword id="KW-1185">Reference proteome</keyword>
<keyword id="KW-0704">Schiff base</keyword>
<sequence>MTHMFEGVGVALATPFTNNEVDFDALERHVQFLLDNNIQAIIVNGTTAESPTLTDEEKEKVLATVVKLVNHNVPVIAGTGTNNTYKSIQASIRAKEIGADAVMLITPYYNKTNQRGLIQHFETIANEVKLPVILYNVPSRTNMTIEPETVEILSHNPYIVALKDATNDFEYFDEVKQRINANEFALYSGNDDNVVKFYQRGGNGVISVIANVIPQEFQYLYDNRQNETDITNYFKPIEKLLEALSLDVNPIPIKVLTAYLGYGHYEVRLPLVPLEEAQCKQVERAFEQFKAGEQ</sequence>
<proteinExistence type="inferred from homology"/>
<feature type="chain" id="PRO_0000103162" description="4-hydroxy-tetrahydrodipicolinate synthase">
    <location>
        <begin position="1"/>
        <end position="294"/>
    </location>
</feature>
<feature type="active site" description="Proton donor/acceptor" evidence="1">
    <location>
        <position position="135"/>
    </location>
</feature>
<feature type="active site" description="Schiff-base intermediate with substrate" evidence="1">
    <location>
        <position position="163"/>
    </location>
</feature>
<feature type="binding site" evidence="1">
    <location>
        <position position="47"/>
    </location>
    <ligand>
        <name>pyruvate</name>
        <dbReference type="ChEBI" id="CHEBI:15361"/>
    </ligand>
</feature>
<feature type="binding site" evidence="1">
    <location>
        <position position="206"/>
    </location>
    <ligand>
        <name>pyruvate</name>
        <dbReference type="ChEBI" id="CHEBI:15361"/>
    </ligand>
</feature>
<feature type="site" description="Part of a proton relay during catalysis" evidence="1">
    <location>
        <position position="46"/>
    </location>
</feature>
<feature type="site" description="Part of a proton relay during catalysis" evidence="1">
    <location>
        <position position="109"/>
    </location>
</feature>
<accession>Q5HPE7</accession>
<comment type="function">
    <text evidence="1">Catalyzes the condensation of (S)-aspartate-beta-semialdehyde [(S)-ASA] and pyruvate to 4-hydroxy-tetrahydrodipicolinate (HTPA).</text>
</comment>
<comment type="catalytic activity">
    <reaction evidence="1">
        <text>L-aspartate 4-semialdehyde + pyruvate = (2S,4S)-4-hydroxy-2,3,4,5-tetrahydrodipicolinate + H2O + H(+)</text>
        <dbReference type="Rhea" id="RHEA:34171"/>
        <dbReference type="ChEBI" id="CHEBI:15361"/>
        <dbReference type="ChEBI" id="CHEBI:15377"/>
        <dbReference type="ChEBI" id="CHEBI:15378"/>
        <dbReference type="ChEBI" id="CHEBI:67139"/>
        <dbReference type="ChEBI" id="CHEBI:537519"/>
        <dbReference type="EC" id="4.3.3.7"/>
    </reaction>
</comment>
<comment type="pathway">
    <text evidence="1">Amino-acid biosynthesis; L-lysine biosynthesis via DAP pathway; (S)-tetrahydrodipicolinate from L-aspartate: step 3/4.</text>
</comment>
<comment type="subunit">
    <text evidence="1">Homodimer.</text>
</comment>
<comment type="subcellular location">
    <subcellularLocation>
        <location evidence="1">Cytoplasm</location>
    </subcellularLocation>
</comment>
<comment type="similarity">
    <text evidence="1">Belongs to the DapA family.</text>
</comment>
<comment type="caution">
    <text evidence="2">Was originally thought to be a dihydrodipicolinate synthase (DHDPS), catalyzing the condensation of (S)-aspartate-beta-semialdehyde [(S)-ASA] and pyruvate to dihydrodipicolinate (DHDP). However, it was shown in E.coli that the product of the enzymatic reaction is not dihydrodipicolinate but in fact (4S)-4-hydroxy-2,3,4,5-tetrahydro-(2S)-dipicolinic acid (HTPA), and that the consecutive dehydration reaction leading to DHDP is not spontaneous but catalyzed by DapB.</text>
</comment>
<gene>
    <name evidence="1" type="primary">dapA</name>
    <name type="ordered locus">SERP0965</name>
</gene>
<name>DAPA_STAEQ</name>
<evidence type="ECO:0000255" key="1">
    <source>
        <dbReference type="HAMAP-Rule" id="MF_00418"/>
    </source>
</evidence>
<evidence type="ECO:0000305" key="2"/>
<organism>
    <name type="scientific">Staphylococcus epidermidis (strain ATCC 35984 / DSM 28319 / BCRC 17069 / CCUG 31568 / BM 3577 / RP62A)</name>
    <dbReference type="NCBI Taxonomy" id="176279"/>
    <lineage>
        <taxon>Bacteria</taxon>
        <taxon>Bacillati</taxon>
        <taxon>Bacillota</taxon>
        <taxon>Bacilli</taxon>
        <taxon>Bacillales</taxon>
        <taxon>Staphylococcaceae</taxon>
        <taxon>Staphylococcus</taxon>
    </lineage>
</organism>
<reference key="1">
    <citation type="journal article" date="2005" name="J. Bacteriol.">
        <title>Insights on evolution of virulence and resistance from the complete genome analysis of an early methicillin-resistant Staphylococcus aureus strain and a biofilm-producing methicillin-resistant Staphylococcus epidermidis strain.</title>
        <authorList>
            <person name="Gill S.R."/>
            <person name="Fouts D.E."/>
            <person name="Archer G.L."/>
            <person name="Mongodin E.F."/>
            <person name="DeBoy R.T."/>
            <person name="Ravel J."/>
            <person name="Paulsen I.T."/>
            <person name="Kolonay J.F."/>
            <person name="Brinkac L.M."/>
            <person name="Beanan M.J."/>
            <person name="Dodson R.J."/>
            <person name="Daugherty S.C."/>
            <person name="Madupu R."/>
            <person name="Angiuoli S.V."/>
            <person name="Durkin A.S."/>
            <person name="Haft D.H."/>
            <person name="Vamathevan J.J."/>
            <person name="Khouri H."/>
            <person name="Utterback T.R."/>
            <person name="Lee C."/>
            <person name="Dimitrov G."/>
            <person name="Jiang L."/>
            <person name="Qin H."/>
            <person name="Weidman J."/>
            <person name="Tran K."/>
            <person name="Kang K.H."/>
            <person name="Hance I.R."/>
            <person name="Nelson K.E."/>
            <person name="Fraser C.M."/>
        </authorList>
    </citation>
    <scope>NUCLEOTIDE SEQUENCE [LARGE SCALE GENOMIC DNA]</scope>
    <source>
        <strain>ATCC 35984 / DSM 28319 / BCRC 17069 / CCUG 31568 / BM 3577 / RP62A</strain>
    </source>
</reference>
<protein>
    <recommendedName>
        <fullName evidence="1">4-hydroxy-tetrahydrodipicolinate synthase</fullName>
        <shortName evidence="1">HTPA synthase</shortName>
        <ecNumber evidence="1">4.3.3.7</ecNumber>
    </recommendedName>
</protein>